<gene>
    <name evidence="1" type="primary">bipA</name>
    <name type="ordered locus">bbp_384</name>
</gene>
<accession>Q89AC9</accession>
<reference key="1">
    <citation type="journal article" date="2003" name="Proc. Natl. Acad. Sci. U.S.A.">
        <title>Reductive genome evolution in Buchnera aphidicola.</title>
        <authorList>
            <person name="van Ham R.C.H.J."/>
            <person name="Kamerbeek J."/>
            <person name="Palacios C."/>
            <person name="Rausell C."/>
            <person name="Abascal F."/>
            <person name="Bastolla U."/>
            <person name="Fernandez J.M."/>
            <person name="Jimenez L."/>
            <person name="Postigo M."/>
            <person name="Silva F.J."/>
            <person name="Tamames J."/>
            <person name="Viguera E."/>
            <person name="Latorre A."/>
            <person name="Valencia A."/>
            <person name="Moran F."/>
            <person name="Moya A."/>
        </authorList>
    </citation>
    <scope>NUCLEOTIDE SEQUENCE [LARGE SCALE GENOMIC DNA]</scope>
    <source>
        <strain>Bp</strain>
    </source>
</reference>
<feature type="chain" id="PRO_0000091549" description="Large ribosomal subunit assembly factor BipA">
    <location>
        <begin position="1"/>
        <end position="611"/>
    </location>
</feature>
<feature type="domain" description="tr-type G" evidence="1">
    <location>
        <begin position="7"/>
        <end position="202"/>
    </location>
</feature>
<feature type="binding site" evidence="1">
    <location>
        <begin position="19"/>
        <end position="24"/>
    </location>
    <ligand>
        <name>GTP</name>
        <dbReference type="ChEBI" id="CHEBI:37565"/>
    </ligand>
</feature>
<feature type="binding site" evidence="1">
    <location>
        <begin position="132"/>
        <end position="135"/>
    </location>
    <ligand>
        <name>GTP</name>
        <dbReference type="ChEBI" id="CHEBI:37565"/>
    </ligand>
</feature>
<name>BIPA_BUCBP</name>
<organism>
    <name type="scientific">Buchnera aphidicola subsp. Baizongia pistaciae (strain Bp)</name>
    <dbReference type="NCBI Taxonomy" id="224915"/>
    <lineage>
        <taxon>Bacteria</taxon>
        <taxon>Pseudomonadati</taxon>
        <taxon>Pseudomonadota</taxon>
        <taxon>Gammaproteobacteria</taxon>
        <taxon>Enterobacterales</taxon>
        <taxon>Erwiniaceae</taxon>
        <taxon>Buchnera</taxon>
    </lineage>
</organism>
<proteinExistence type="inferred from homology"/>
<sequence length="611" mass="69146">MQKKTNKNLRNIAIIAHVDHGKTTLVDKLLQQSGTFKKHEEFSERIMDSNDLEKERGITILAKNTAIQWKKYRINIIDTPGHADFGGEVERILSMVDSVLLVVDALEGPMPQTRFVTQKAFSYGIKPIVVINKIDRKHARPNWVIDQIFDLFVNLNATDEQLDFPTIYTSALLGTSGVSYNHMNPDMIPLYNAIVKYTPPPTVYPNCPFQMQISQLDYDNYLGIIGIGRINKGSVTSNQSISIINNTEVKRTGKIGKILQYLGLNKIEINEAQSGDIIAITGIDKLNISDTICDPQYISALPMLKIDEPTVEMLFSVNKSPFSGTEGKYITSRQIFNRLKKEENYNVALKIKETNDTNTFSVSGRGELHLSILIENMRREGFELEVSRPQVILKTINELIQEPMETVVLDIENKYQGTIMKTIGQRKGTISNITPDQNNERTRLDCIISSRSLIGFRTEFSTLTSGSGLFYSTFSHYQKIESNKIKRHRNGVLIANKTGQAIGFSLFNLQNRGKLFITHGTKVYEGQIVGIHNRVNDLTVNCLSGKKLTNMRASGSDEAITLTTPIKMTLEYAISFINDDELVEITPKSIRLRKRYLKENERKILLRNIKE</sequence>
<dbReference type="EC" id="3.6.5.-" evidence="1"/>
<dbReference type="EMBL" id="AE016826">
    <property type="protein sequence ID" value="AAO27096.1"/>
    <property type="status" value="ALT_INIT"/>
    <property type="molecule type" value="Genomic_DNA"/>
</dbReference>
<dbReference type="RefSeq" id="WP_044010641.1">
    <property type="nucleotide sequence ID" value="NC_004545.1"/>
</dbReference>
<dbReference type="SMR" id="Q89AC9"/>
<dbReference type="STRING" id="224915.bbp_384"/>
<dbReference type="KEGG" id="bab:bbp_384"/>
<dbReference type="eggNOG" id="COG1217">
    <property type="taxonomic scope" value="Bacteria"/>
</dbReference>
<dbReference type="HOGENOM" id="CLU_017016_4_0_6"/>
<dbReference type="OrthoDB" id="9804431at2"/>
<dbReference type="Proteomes" id="UP000000601">
    <property type="component" value="Chromosome"/>
</dbReference>
<dbReference type="GO" id="GO:0005829">
    <property type="term" value="C:cytosol"/>
    <property type="evidence" value="ECO:0007669"/>
    <property type="project" value="TreeGrafter"/>
</dbReference>
<dbReference type="GO" id="GO:1990904">
    <property type="term" value="C:ribonucleoprotein complex"/>
    <property type="evidence" value="ECO:0007669"/>
    <property type="project" value="TreeGrafter"/>
</dbReference>
<dbReference type="GO" id="GO:0005525">
    <property type="term" value="F:GTP binding"/>
    <property type="evidence" value="ECO:0007669"/>
    <property type="project" value="UniProtKB-UniRule"/>
</dbReference>
<dbReference type="GO" id="GO:0003924">
    <property type="term" value="F:GTPase activity"/>
    <property type="evidence" value="ECO:0007669"/>
    <property type="project" value="UniProtKB-UniRule"/>
</dbReference>
<dbReference type="GO" id="GO:0097216">
    <property type="term" value="F:guanosine tetraphosphate binding"/>
    <property type="evidence" value="ECO:0007669"/>
    <property type="project" value="UniProtKB-ARBA"/>
</dbReference>
<dbReference type="GO" id="GO:0043022">
    <property type="term" value="F:ribosome binding"/>
    <property type="evidence" value="ECO:0007669"/>
    <property type="project" value="UniProtKB-UniRule"/>
</dbReference>
<dbReference type="GO" id="GO:0019843">
    <property type="term" value="F:rRNA binding"/>
    <property type="evidence" value="ECO:0007669"/>
    <property type="project" value="UniProtKB-KW"/>
</dbReference>
<dbReference type="GO" id="GO:0000049">
    <property type="term" value="F:tRNA binding"/>
    <property type="evidence" value="ECO:0007669"/>
    <property type="project" value="UniProtKB-KW"/>
</dbReference>
<dbReference type="GO" id="GO:0000027">
    <property type="term" value="P:ribosomal large subunit assembly"/>
    <property type="evidence" value="ECO:0007669"/>
    <property type="project" value="UniProtKB-UniRule"/>
</dbReference>
<dbReference type="CDD" id="cd16263">
    <property type="entry name" value="BipA_III"/>
    <property type="match status" value="1"/>
</dbReference>
<dbReference type="CDD" id="cd03710">
    <property type="entry name" value="BipA_TypA_C"/>
    <property type="match status" value="1"/>
</dbReference>
<dbReference type="CDD" id="cd03691">
    <property type="entry name" value="BipA_TypA_II"/>
    <property type="match status" value="1"/>
</dbReference>
<dbReference type="CDD" id="cd01891">
    <property type="entry name" value="TypA_BipA"/>
    <property type="match status" value="1"/>
</dbReference>
<dbReference type="FunFam" id="2.40.30.10:FF:000016">
    <property type="entry name" value="GTP-binding protein TypA"/>
    <property type="match status" value="1"/>
</dbReference>
<dbReference type="FunFam" id="2.40.50.250:FF:000001">
    <property type="entry name" value="GTP-binding protein TypA"/>
    <property type="match status" value="1"/>
</dbReference>
<dbReference type="FunFam" id="3.30.70.240:FF:000002">
    <property type="entry name" value="GTP-binding protein TypA"/>
    <property type="match status" value="1"/>
</dbReference>
<dbReference type="FunFam" id="3.30.70.870:FF:000003">
    <property type="entry name" value="GTP-binding protein TypA"/>
    <property type="match status" value="1"/>
</dbReference>
<dbReference type="FunFam" id="3.40.50.300:FF:000055">
    <property type="entry name" value="GTP-binding protein TypA"/>
    <property type="match status" value="1"/>
</dbReference>
<dbReference type="Gene3D" id="3.30.70.240">
    <property type="match status" value="1"/>
</dbReference>
<dbReference type="Gene3D" id="2.40.50.250">
    <property type="entry name" value="bipa protein"/>
    <property type="match status" value="1"/>
</dbReference>
<dbReference type="Gene3D" id="3.30.70.870">
    <property type="entry name" value="Elongation Factor G (Translational Gtpase), domain 3"/>
    <property type="match status" value="1"/>
</dbReference>
<dbReference type="Gene3D" id="3.40.50.300">
    <property type="entry name" value="P-loop containing nucleotide triphosphate hydrolases"/>
    <property type="match status" value="1"/>
</dbReference>
<dbReference type="Gene3D" id="2.40.30.10">
    <property type="entry name" value="Translation factors"/>
    <property type="match status" value="1"/>
</dbReference>
<dbReference type="HAMAP" id="MF_00849">
    <property type="entry name" value="BipA"/>
    <property type="match status" value="1"/>
</dbReference>
<dbReference type="InterPro" id="IPR006298">
    <property type="entry name" value="BipA"/>
</dbReference>
<dbReference type="InterPro" id="IPR048876">
    <property type="entry name" value="BipA_C"/>
</dbReference>
<dbReference type="InterPro" id="IPR047041">
    <property type="entry name" value="BipA_GTP-bd_dom"/>
</dbReference>
<dbReference type="InterPro" id="IPR047042">
    <property type="entry name" value="BipA_II"/>
</dbReference>
<dbReference type="InterPro" id="IPR047043">
    <property type="entry name" value="BipA_III"/>
</dbReference>
<dbReference type="InterPro" id="IPR035651">
    <property type="entry name" value="BipA_V"/>
</dbReference>
<dbReference type="InterPro" id="IPR035647">
    <property type="entry name" value="EFG_III/V"/>
</dbReference>
<dbReference type="InterPro" id="IPR000640">
    <property type="entry name" value="EFG_V-like"/>
</dbReference>
<dbReference type="InterPro" id="IPR004161">
    <property type="entry name" value="EFTu-like_2"/>
</dbReference>
<dbReference type="InterPro" id="IPR031157">
    <property type="entry name" value="G_TR_CS"/>
</dbReference>
<dbReference type="InterPro" id="IPR027417">
    <property type="entry name" value="P-loop_NTPase"/>
</dbReference>
<dbReference type="InterPro" id="IPR005225">
    <property type="entry name" value="Small_GTP-bd"/>
</dbReference>
<dbReference type="InterPro" id="IPR000795">
    <property type="entry name" value="T_Tr_GTP-bd_dom"/>
</dbReference>
<dbReference type="InterPro" id="IPR009000">
    <property type="entry name" value="Transl_B-barrel_sf"/>
</dbReference>
<dbReference type="InterPro" id="IPR042116">
    <property type="entry name" value="TypA/BipA_C"/>
</dbReference>
<dbReference type="NCBIfam" id="TIGR00231">
    <property type="entry name" value="small_GTP"/>
    <property type="match status" value="1"/>
</dbReference>
<dbReference type="NCBIfam" id="TIGR01394">
    <property type="entry name" value="TypA_BipA"/>
    <property type="match status" value="1"/>
</dbReference>
<dbReference type="PANTHER" id="PTHR42908:SF8">
    <property type="entry name" value="TR-TYPE G DOMAIN-CONTAINING PROTEIN"/>
    <property type="match status" value="1"/>
</dbReference>
<dbReference type="PANTHER" id="PTHR42908">
    <property type="entry name" value="TRANSLATION ELONGATION FACTOR-RELATED"/>
    <property type="match status" value="1"/>
</dbReference>
<dbReference type="Pfam" id="PF21018">
    <property type="entry name" value="BipA_C"/>
    <property type="match status" value="1"/>
</dbReference>
<dbReference type="Pfam" id="PF00679">
    <property type="entry name" value="EFG_C"/>
    <property type="match status" value="1"/>
</dbReference>
<dbReference type="Pfam" id="PF00009">
    <property type="entry name" value="GTP_EFTU"/>
    <property type="match status" value="1"/>
</dbReference>
<dbReference type="Pfam" id="PF03144">
    <property type="entry name" value="GTP_EFTU_D2"/>
    <property type="match status" value="1"/>
</dbReference>
<dbReference type="PRINTS" id="PR00315">
    <property type="entry name" value="ELONGATNFCT"/>
</dbReference>
<dbReference type="SUPFAM" id="SSF54980">
    <property type="entry name" value="EF-G C-terminal domain-like"/>
    <property type="match status" value="2"/>
</dbReference>
<dbReference type="SUPFAM" id="SSF52540">
    <property type="entry name" value="P-loop containing nucleoside triphosphate hydrolases"/>
    <property type="match status" value="1"/>
</dbReference>
<dbReference type="SUPFAM" id="SSF50447">
    <property type="entry name" value="Translation proteins"/>
    <property type="match status" value="1"/>
</dbReference>
<dbReference type="PROSITE" id="PS00301">
    <property type="entry name" value="G_TR_1"/>
    <property type="match status" value="1"/>
</dbReference>
<dbReference type="PROSITE" id="PS51722">
    <property type="entry name" value="G_TR_2"/>
    <property type="match status" value="1"/>
</dbReference>
<keyword id="KW-0963">Cytoplasm</keyword>
<keyword id="KW-0342">GTP-binding</keyword>
<keyword id="KW-0378">Hydrolase</keyword>
<keyword id="KW-0547">Nucleotide-binding</keyword>
<keyword id="KW-1185">Reference proteome</keyword>
<keyword id="KW-0690">Ribosome biogenesis</keyword>
<keyword id="KW-0694">RNA-binding</keyword>
<keyword id="KW-0699">rRNA-binding</keyword>
<keyword id="KW-0820">tRNA-binding</keyword>
<evidence type="ECO:0000255" key="1">
    <source>
        <dbReference type="HAMAP-Rule" id="MF_00849"/>
    </source>
</evidence>
<evidence type="ECO:0000305" key="2"/>
<protein>
    <recommendedName>
        <fullName evidence="1">Large ribosomal subunit assembly factor BipA</fullName>
        <ecNumber evidence="1">3.6.5.-</ecNumber>
    </recommendedName>
    <alternativeName>
        <fullName evidence="2">50S ribosomal subunit assembly factor BipA</fullName>
    </alternativeName>
    <alternativeName>
        <fullName evidence="1">GTP-binding protein BipA</fullName>
    </alternativeName>
</protein>
<comment type="function">
    <text evidence="1">A 50S ribosomal subunit assembly protein with GTPase activity, required for 50S subunit assembly at low temperatures, may also play a role in translation. Binds GTP and analogs. Binds the 70S ribosome between the 30S and 50S subunits, in a similar position as ribosome-bound EF-G; it contacts a number of ribosomal proteins, both rRNAs and the A-site tRNA.</text>
</comment>
<comment type="catalytic activity">
    <reaction evidence="1">
        <text>GTP + H2O = GDP + phosphate + H(+)</text>
        <dbReference type="Rhea" id="RHEA:19669"/>
        <dbReference type="ChEBI" id="CHEBI:15377"/>
        <dbReference type="ChEBI" id="CHEBI:15378"/>
        <dbReference type="ChEBI" id="CHEBI:37565"/>
        <dbReference type="ChEBI" id="CHEBI:43474"/>
        <dbReference type="ChEBI" id="CHEBI:58189"/>
    </reaction>
</comment>
<comment type="subunit">
    <text evidence="1">Monomer.</text>
</comment>
<comment type="subcellular location">
    <subcellularLocation>
        <location evidence="1">Cytoplasm</location>
    </subcellularLocation>
    <text evidence="1">Binds to ribosomes.</text>
</comment>
<comment type="similarity">
    <text evidence="1">Belongs to the TRAFAC class translation factor GTPase superfamily. Classic translation factor GTPase family. BipA subfamily.</text>
</comment>
<comment type="sequence caution" evidence="2">
    <conflict type="erroneous initiation">
        <sequence resource="EMBL-CDS" id="AAO27096"/>
    </conflict>
    <text>Truncated N-terminus.</text>
</comment>